<protein>
    <recommendedName>
        <fullName>Calcium-dependent protein kinase 6</fullName>
        <ecNumber>2.7.11.1</ecNumber>
    </recommendedName>
    <alternativeName>
        <fullName>Calcium-dependent protein kinase isoform CDPK3</fullName>
        <shortName>AtCDPK3</shortName>
    </alternativeName>
    <alternativeName>
        <fullName>Calmodulin-domain protein kinase CDPK isoform 6</fullName>
    </alternativeName>
</protein>
<sequence>MGNSCRGSFKDKIYEGNHSRPEENSKSTTTTVSSVHSPTTDQDFSKQNTNPALVIPVKEPIMRRNVDNQSYYVLGHKTPNIRDLYTLSRKLGQGQFGTTYLCTDIATGVDYACKSISKRKLISKEDVEDVRREIQIMHHLAGHKNIVTIKGAYEDPLYVHIVMELCAGGELFDRIIHRGHYSERKAAELTKIIVGVVEACHSLGVMHRDLKPENFLLVNKDDDFSLKAIDFGLSVFFKPGQIFKDVVGSPYYVAPEVLLKHYGPEADVWTAGVILYILLSGVPPFWAETQQGIFDAVLKGYIDFDTDPWPVISDSAKDLIRKMLCSSPSERLTAHEVLRHPWICENGVAPDRALDPAVLSRLKQFSAMNKLKKMALKVIAESLSEEEIAGLRAMFEAMDTDNSGAITFDELKAGLRRYGSTLKDTEIRDLMEAADVDNSGTIDYSEFIAATIHLNKLEREEHLVSAFQYFDKDGSGYITIDELQQSCIEHGMTDVFLEDIIKEVDQDNDGRIDYEEFVAMMQKGNAGVGRRTMKNSLNISMRDV</sequence>
<accession>Q38872</accession>
<accession>Q39014</accession>
<comment type="function">
    <text evidence="8 11">May play a role in signal transduction pathways that involve calcium as a second messenger. Functions in abscisic acid (ABA) regulation of guard cell S-type anion- and Ca(2+)-permeable channels and stomatal closure (PubMed:17032064). Phosphorylates FD (PubMed:25661797).</text>
</comment>
<comment type="catalytic activity">
    <reaction>
        <text>L-seryl-[protein] + ATP = O-phospho-L-seryl-[protein] + ADP + H(+)</text>
        <dbReference type="Rhea" id="RHEA:17989"/>
        <dbReference type="Rhea" id="RHEA-COMP:9863"/>
        <dbReference type="Rhea" id="RHEA-COMP:11604"/>
        <dbReference type="ChEBI" id="CHEBI:15378"/>
        <dbReference type="ChEBI" id="CHEBI:29999"/>
        <dbReference type="ChEBI" id="CHEBI:30616"/>
        <dbReference type="ChEBI" id="CHEBI:83421"/>
        <dbReference type="ChEBI" id="CHEBI:456216"/>
        <dbReference type="EC" id="2.7.11.1"/>
    </reaction>
</comment>
<comment type="catalytic activity">
    <reaction>
        <text>L-threonyl-[protein] + ATP = O-phospho-L-threonyl-[protein] + ADP + H(+)</text>
        <dbReference type="Rhea" id="RHEA:46608"/>
        <dbReference type="Rhea" id="RHEA-COMP:11060"/>
        <dbReference type="Rhea" id="RHEA-COMP:11605"/>
        <dbReference type="ChEBI" id="CHEBI:15378"/>
        <dbReference type="ChEBI" id="CHEBI:30013"/>
        <dbReference type="ChEBI" id="CHEBI:30616"/>
        <dbReference type="ChEBI" id="CHEBI:61977"/>
        <dbReference type="ChEBI" id="CHEBI:456216"/>
        <dbReference type="EC" id="2.7.11.1"/>
    </reaction>
</comment>
<comment type="activity regulation">
    <text evidence="1">Activated by calcium. Autophosphorylation may play an important role in the regulation of the kinase activity (By similarity).</text>
</comment>
<comment type="subunit">
    <text evidence="10 11">Interacts with SLAC1 (PubMed:20385816). Interacts with FD (PubMed:25661797).</text>
</comment>
<comment type="subcellular location">
    <subcellularLocation>
        <location evidence="9">Cell membrane</location>
        <topology evidence="9">Lipid-anchor</topology>
    </subcellularLocation>
    <subcellularLocation>
        <location evidence="11">Nucleus</location>
    </subcellularLocation>
</comment>
<comment type="tissue specificity">
    <text evidence="8 11">Expressed in both guard cells and mesophyll cells (PubMed:17032064). Expressed in the shoot apical meristem (PubMed:25661797).</text>
</comment>
<comment type="domain">
    <text evidence="1">There are 3 contiguous domains conserved in the CDPK subfamily: a kinase domain, an autoinhibitory (junction) domain and a calmodulin-like domain. The autoinhibitory domain (349-379) inactivates kinase activity under calcium-free conditions (By similarity).</text>
</comment>
<comment type="similarity">
    <text evidence="4">Belongs to the protein kinase superfamily. Ser/Thr protein kinase family. CDPK subfamily.</text>
</comment>
<comment type="sequence caution" evidence="12">
    <conflict type="frameshift">
        <sequence resource="EMBL-CDS" id="BAA05918"/>
    </conflict>
</comment>
<proteinExistence type="evidence at protein level"/>
<reference key="1">
    <citation type="journal article" date="1996" name="Plant Mol. Biol.">
        <title>Characterization of eight new members of the calmodulin-like domain protein kinase gene family from Arabidopsis thaliana.</title>
        <authorList>
            <person name="Hrabak E.M."/>
            <person name="Dickmann L.J."/>
            <person name="Satterlee J.S."/>
            <person name="Sussman M.R."/>
        </authorList>
    </citation>
    <scope>NUCLEOTIDE SEQUENCE [MRNA]</scope>
    <source>
        <strain>cv. Columbia</strain>
    </source>
</reference>
<reference key="2">
    <citation type="journal article" date="1999" name="Nature">
        <title>Sequence and analysis of chromosome 2 of the plant Arabidopsis thaliana.</title>
        <authorList>
            <person name="Lin X."/>
            <person name="Kaul S."/>
            <person name="Rounsley S.D."/>
            <person name="Shea T.P."/>
            <person name="Benito M.-I."/>
            <person name="Town C.D."/>
            <person name="Fujii C.Y."/>
            <person name="Mason T.M."/>
            <person name="Bowman C.L."/>
            <person name="Barnstead M.E."/>
            <person name="Feldblyum T.V."/>
            <person name="Buell C.R."/>
            <person name="Ketchum K.A."/>
            <person name="Lee J.J."/>
            <person name="Ronning C.M."/>
            <person name="Koo H.L."/>
            <person name="Moffat K.S."/>
            <person name="Cronin L.A."/>
            <person name="Shen M."/>
            <person name="Pai G."/>
            <person name="Van Aken S."/>
            <person name="Umayam L."/>
            <person name="Tallon L.J."/>
            <person name="Gill J.E."/>
            <person name="Adams M.D."/>
            <person name="Carrera A.J."/>
            <person name="Creasy T.H."/>
            <person name="Goodman H.M."/>
            <person name="Somerville C.R."/>
            <person name="Copenhaver G.P."/>
            <person name="Preuss D."/>
            <person name="Nierman W.C."/>
            <person name="White O."/>
            <person name="Eisen J.A."/>
            <person name="Salzberg S.L."/>
            <person name="Fraser C.M."/>
            <person name="Venter J.C."/>
        </authorList>
    </citation>
    <scope>NUCLEOTIDE SEQUENCE [LARGE SCALE GENOMIC DNA]</scope>
    <source>
        <strain>cv. Columbia</strain>
    </source>
</reference>
<reference key="3">
    <citation type="journal article" date="2017" name="Plant J.">
        <title>Araport11: a complete reannotation of the Arabidopsis thaliana reference genome.</title>
        <authorList>
            <person name="Cheng C.Y."/>
            <person name="Krishnakumar V."/>
            <person name="Chan A.P."/>
            <person name="Thibaud-Nissen F."/>
            <person name="Schobel S."/>
            <person name="Town C.D."/>
        </authorList>
    </citation>
    <scope>GENOME REANNOTATION</scope>
    <source>
        <strain>cv. Columbia</strain>
    </source>
</reference>
<reference key="4">
    <citation type="journal article" date="2003" name="Science">
        <title>Empirical analysis of transcriptional activity in the Arabidopsis genome.</title>
        <authorList>
            <person name="Yamada K."/>
            <person name="Lim J."/>
            <person name="Dale J.M."/>
            <person name="Chen H."/>
            <person name="Shinn P."/>
            <person name="Palm C.J."/>
            <person name="Southwick A.M."/>
            <person name="Wu H.C."/>
            <person name="Kim C.J."/>
            <person name="Nguyen M."/>
            <person name="Pham P.K."/>
            <person name="Cheuk R.F."/>
            <person name="Karlin-Newmann G."/>
            <person name="Liu S.X."/>
            <person name="Lam B."/>
            <person name="Sakano H."/>
            <person name="Wu T."/>
            <person name="Yu G."/>
            <person name="Miranda M."/>
            <person name="Quach H.L."/>
            <person name="Tripp M."/>
            <person name="Chang C.H."/>
            <person name="Lee J.M."/>
            <person name="Toriumi M.J."/>
            <person name="Chan M.M."/>
            <person name="Tang C.C."/>
            <person name="Onodera C.S."/>
            <person name="Deng J.M."/>
            <person name="Akiyama K."/>
            <person name="Ansari Y."/>
            <person name="Arakawa T."/>
            <person name="Banh J."/>
            <person name="Banno F."/>
            <person name="Bowser L."/>
            <person name="Brooks S.Y."/>
            <person name="Carninci P."/>
            <person name="Chao Q."/>
            <person name="Choy N."/>
            <person name="Enju A."/>
            <person name="Goldsmith A.D."/>
            <person name="Gurjal M."/>
            <person name="Hansen N.F."/>
            <person name="Hayashizaki Y."/>
            <person name="Johnson-Hopson C."/>
            <person name="Hsuan V.W."/>
            <person name="Iida K."/>
            <person name="Karnes M."/>
            <person name="Khan S."/>
            <person name="Koesema E."/>
            <person name="Ishida J."/>
            <person name="Jiang P.X."/>
            <person name="Jones T."/>
            <person name="Kawai J."/>
            <person name="Kamiya A."/>
            <person name="Meyers C."/>
            <person name="Nakajima M."/>
            <person name="Narusaka M."/>
            <person name="Seki M."/>
            <person name="Sakurai T."/>
            <person name="Satou M."/>
            <person name="Tamse R."/>
            <person name="Vaysberg M."/>
            <person name="Wallender E.K."/>
            <person name="Wong C."/>
            <person name="Yamamura Y."/>
            <person name="Yuan S."/>
            <person name="Shinozaki K."/>
            <person name="Davis R.W."/>
            <person name="Theologis A."/>
            <person name="Ecker J.R."/>
        </authorList>
    </citation>
    <scope>NUCLEOTIDE SEQUENCE [LARGE SCALE MRNA]</scope>
    <source>
        <strain>cv. Columbia</strain>
    </source>
</reference>
<reference key="5">
    <citation type="journal article" date="1994" name="Plant Physiol.">
        <title>An Arabidopsis thaliana cDNA encoding Ca(2+)-dependent protein kinase.</title>
        <authorList>
            <person name="Urao T."/>
            <person name="Katagiri T."/>
            <person name="Mizoguchi T."/>
            <person name="Yamaguchi-Shinozaki K."/>
            <person name="Hayashida N."/>
            <person name="Shinozaki K."/>
        </authorList>
    </citation>
    <scope>NUCLEOTIDE SEQUENCE [MRNA] OF 26-544</scope>
    <source>
        <strain>cv. Columbia</strain>
    </source>
</reference>
<reference key="6">
    <citation type="journal article" date="2001" name="New Phytol.">
        <title>The CDPK superfamily of protein kinases.</title>
        <authorList>
            <person name="Harmon A.C."/>
            <person name="Gribskov M."/>
            <person name="Gubrium E."/>
            <person name="Harper J.F."/>
        </authorList>
    </citation>
    <scope>GENE FAMILY</scope>
    <scope>NOMENCLATURE</scope>
</reference>
<reference key="7">
    <citation type="journal article" date="2002" name="Plant Physiol.">
        <title>Calcium signaling through protein kinases. The Arabidopsis calcium-dependent protein kinase gene family.</title>
        <authorList>
            <person name="Cheng S.-H."/>
            <person name="Willmann M.R."/>
            <person name="Chen H.-C."/>
            <person name="Sheen J."/>
        </authorList>
    </citation>
    <scope>GENE FAMILY</scope>
    <scope>NOMENCLATURE</scope>
</reference>
<reference key="8">
    <citation type="journal article" date="2003" name="Plant Physiol.">
        <title>The Arabidopsis CDPK-SnRK superfamily of protein kinases.</title>
        <authorList>
            <person name="Hrabak E.M."/>
            <person name="Chan C.W.M."/>
            <person name="Gribskov M."/>
            <person name="Harper J.F."/>
            <person name="Choi J.H."/>
            <person name="Halford N."/>
            <person name="Kudla J."/>
            <person name="Luan S."/>
            <person name="Nimmo H.G."/>
            <person name="Sussman M.R."/>
            <person name="Thomas M."/>
            <person name="Walker-Simmons K."/>
            <person name="Zhu J.-K."/>
            <person name="Harmon A.C."/>
        </authorList>
    </citation>
    <scope>GENE FAMILY</scope>
    <scope>NOMENCLATURE</scope>
</reference>
<reference key="9">
    <citation type="journal article" date="2006" name="PLoS Biol.">
        <title>CDPKs CPK6 and CPK3 function in ABA regulation of guard cell S-type anion- and Ca(2+)-permeable channels and stomatal closure.</title>
        <authorList>
            <person name="Mori I.C."/>
            <person name="Murata Y."/>
            <person name="Yang Y."/>
            <person name="Munemasa S."/>
            <person name="Wang Y.-F."/>
            <person name="Andreoli S."/>
            <person name="Tiriac H."/>
            <person name="Alonso J.M."/>
            <person name="Harper J.F."/>
            <person name="Ecker J.R."/>
            <person name="Kwak J.M."/>
            <person name="Schroeder J.I."/>
        </authorList>
    </citation>
    <scope>FUNCTION</scope>
    <scope>TISSUE SPECIFICITY</scope>
</reference>
<reference key="10">
    <citation type="journal article" date="2008" name="Cell Cycle">
        <title>Experimental testing of predicted myristoylation targets involved in asymmetric cell division and calcium-dependent signalling.</title>
        <authorList>
            <person name="Benetka W."/>
            <person name="Mehlmer N."/>
            <person name="Maurer-Stroh S."/>
            <person name="Sammer M."/>
            <person name="Koranda M."/>
            <person name="Neumueller R."/>
            <person name="Betschinger J."/>
            <person name="Knoblich J.A."/>
            <person name="Teige M."/>
            <person name="Eisenhaber F."/>
        </authorList>
    </citation>
    <scope>MYRISTOYLATION AT GLY-2</scope>
    <scope>SUBCELLULAR LOCATION</scope>
</reference>
<reference key="11">
    <citation type="journal article" date="2010" name="Proc. Natl. Acad. Sci. U.S.A.">
        <title>Guard cell anion channel SLAC1 is regulated by CDPK protein kinases with distinct Ca2+ affinities.</title>
        <authorList>
            <person name="Geiger D."/>
            <person name="Scherzer S."/>
            <person name="Mumm P."/>
            <person name="Marten I."/>
            <person name="Ache P."/>
            <person name="Matschi S."/>
            <person name="Liese A."/>
            <person name="Wellmann C."/>
            <person name="Al-Rasheid K.A.S."/>
            <person name="Grill E."/>
            <person name="Romeis T."/>
            <person name="Hedrich R."/>
        </authorList>
    </citation>
    <scope>INTERACTION WITH SLAC1</scope>
</reference>
<reference key="12">
    <citation type="journal article" date="2015" name="Sci. Rep.">
        <title>Calcium-dependent protein kinases responsible for the phosphorylation of a bZIP transcription factor FD crucial for the florigen complex formation.</title>
        <authorList>
            <person name="Kawamoto N."/>
            <person name="Sasabe M."/>
            <person name="Endo M."/>
            <person name="Machida Y."/>
            <person name="Araki T."/>
        </authorList>
    </citation>
    <scope>FUNCTION</scope>
    <scope>INTERACTION WITH FD</scope>
    <scope>SUBCELLULAR LOCATION</scope>
    <scope>TISSUE SPECIFICITY$</scope>
</reference>
<feature type="initiator methionine" description="Removed" evidence="3">
    <location>
        <position position="1"/>
    </location>
</feature>
<feature type="chain" id="PRO_0000363332" description="Calcium-dependent protein kinase 6">
    <location>
        <begin position="2"/>
        <end position="544"/>
    </location>
</feature>
<feature type="domain" description="Protein kinase" evidence="4">
    <location>
        <begin position="85"/>
        <end position="343"/>
    </location>
</feature>
<feature type="domain" description="EF-hand 1" evidence="5">
    <location>
        <begin position="386"/>
        <end position="421"/>
    </location>
</feature>
<feature type="domain" description="EF-hand 2" evidence="5">
    <location>
        <begin position="422"/>
        <end position="457"/>
    </location>
</feature>
<feature type="domain" description="EF-hand 3" evidence="5">
    <location>
        <begin position="458"/>
        <end position="493"/>
    </location>
</feature>
<feature type="domain" description="EF-hand 4" evidence="5">
    <location>
        <begin position="497"/>
        <end position="527"/>
    </location>
</feature>
<feature type="region of interest" description="Disordered" evidence="7">
    <location>
        <begin position="1"/>
        <end position="47"/>
    </location>
</feature>
<feature type="region of interest" description="Autoinhibitory domain" evidence="1">
    <location>
        <begin position="349"/>
        <end position="379"/>
    </location>
</feature>
<feature type="compositionally biased region" description="Basic and acidic residues" evidence="7">
    <location>
        <begin position="8"/>
        <end position="25"/>
    </location>
</feature>
<feature type="compositionally biased region" description="Low complexity" evidence="7">
    <location>
        <begin position="26"/>
        <end position="40"/>
    </location>
</feature>
<feature type="active site" description="Proton acceptor" evidence="4 6">
    <location>
        <position position="209"/>
    </location>
</feature>
<feature type="binding site" evidence="4">
    <location>
        <begin position="91"/>
        <end position="99"/>
    </location>
    <ligand>
        <name>ATP</name>
        <dbReference type="ChEBI" id="CHEBI:30616"/>
    </ligand>
</feature>
<feature type="binding site" evidence="4">
    <location>
        <position position="114"/>
    </location>
    <ligand>
        <name>ATP</name>
        <dbReference type="ChEBI" id="CHEBI:30616"/>
    </ligand>
</feature>
<feature type="binding site" evidence="5">
    <location>
        <position position="399"/>
    </location>
    <ligand>
        <name>Ca(2+)</name>
        <dbReference type="ChEBI" id="CHEBI:29108"/>
        <label>1</label>
    </ligand>
</feature>
<feature type="binding site" evidence="5">
    <location>
        <position position="401"/>
    </location>
    <ligand>
        <name>Ca(2+)</name>
        <dbReference type="ChEBI" id="CHEBI:29108"/>
        <label>1</label>
    </ligand>
</feature>
<feature type="binding site" evidence="5">
    <location>
        <position position="403"/>
    </location>
    <ligand>
        <name>Ca(2+)</name>
        <dbReference type="ChEBI" id="CHEBI:29108"/>
        <label>1</label>
    </ligand>
</feature>
<feature type="binding site" evidence="5">
    <location>
        <position position="410"/>
    </location>
    <ligand>
        <name>Ca(2+)</name>
        <dbReference type="ChEBI" id="CHEBI:29108"/>
        <label>1</label>
    </ligand>
</feature>
<feature type="binding site" evidence="5">
    <location>
        <position position="435"/>
    </location>
    <ligand>
        <name>Ca(2+)</name>
        <dbReference type="ChEBI" id="CHEBI:29108"/>
        <label>2</label>
    </ligand>
</feature>
<feature type="binding site" evidence="5">
    <location>
        <position position="437"/>
    </location>
    <ligand>
        <name>Ca(2+)</name>
        <dbReference type="ChEBI" id="CHEBI:29108"/>
        <label>2</label>
    </ligand>
</feature>
<feature type="binding site" evidence="5">
    <location>
        <position position="439"/>
    </location>
    <ligand>
        <name>Ca(2+)</name>
        <dbReference type="ChEBI" id="CHEBI:29108"/>
        <label>2</label>
    </ligand>
</feature>
<feature type="binding site" evidence="5">
    <location>
        <position position="441"/>
    </location>
    <ligand>
        <name>Ca(2+)</name>
        <dbReference type="ChEBI" id="CHEBI:29108"/>
        <label>2</label>
    </ligand>
</feature>
<feature type="binding site" evidence="5">
    <location>
        <position position="446"/>
    </location>
    <ligand>
        <name>Ca(2+)</name>
        <dbReference type="ChEBI" id="CHEBI:29108"/>
        <label>2</label>
    </ligand>
</feature>
<feature type="binding site" evidence="5">
    <location>
        <position position="471"/>
    </location>
    <ligand>
        <name>Ca(2+)</name>
        <dbReference type="ChEBI" id="CHEBI:29108"/>
        <label>3</label>
    </ligand>
</feature>
<feature type="binding site" evidence="5">
    <location>
        <position position="473"/>
    </location>
    <ligand>
        <name>Ca(2+)</name>
        <dbReference type="ChEBI" id="CHEBI:29108"/>
        <label>3</label>
    </ligand>
</feature>
<feature type="binding site" evidence="5">
    <location>
        <position position="475"/>
    </location>
    <ligand>
        <name>Ca(2+)</name>
        <dbReference type="ChEBI" id="CHEBI:29108"/>
        <label>3</label>
    </ligand>
</feature>
<feature type="binding site" evidence="5">
    <location>
        <position position="477"/>
    </location>
    <ligand>
        <name>Ca(2+)</name>
        <dbReference type="ChEBI" id="CHEBI:29108"/>
        <label>3</label>
    </ligand>
</feature>
<feature type="binding site" evidence="5">
    <location>
        <position position="482"/>
    </location>
    <ligand>
        <name>Ca(2+)</name>
        <dbReference type="ChEBI" id="CHEBI:29108"/>
        <label>3</label>
    </ligand>
</feature>
<feature type="binding site" evidence="5">
    <location>
        <position position="505"/>
    </location>
    <ligand>
        <name>Ca(2+)</name>
        <dbReference type="ChEBI" id="CHEBI:29108"/>
        <label>4</label>
    </ligand>
</feature>
<feature type="binding site" evidence="5">
    <location>
        <position position="507"/>
    </location>
    <ligand>
        <name>Ca(2+)</name>
        <dbReference type="ChEBI" id="CHEBI:29108"/>
        <label>4</label>
    </ligand>
</feature>
<feature type="binding site" evidence="5">
    <location>
        <position position="509"/>
    </location>
    <ligand>
        <name>Ca(2+)</name>
        <dbReference type="ChEBI" id="CHEBI:29108"/>
        <label>4</label>
    </ligand>
</feature>
<feature type="binding site" evidence="5">
    <location>
        <position position="511"/>
    </location>
    <ligand>
        <name>Ca(2+)</name>
        <dbReference type="ChEBI" id="CHEBI:29108"/>
        <label>4</label>
    </ligand>
</feature>
<feature type="binding site" evidence="5">
    <location>
        <position position="516"/>
    </location>
    <ligand>
        <name>Ca(2+)</name>
        <dbReference type="ChEBI" id="CHEBI:29108"/>
        <label>4</label>
    </ligand>
</feature>
<feature type="modified residue" description="Phosphoserine" evidence="2">
    <location>
        <position position="249"/>
    </location>
</feature>
<feature type="lipid moiety-binding region" description="N-myristoyl glycine" evidence="9">
    <location>
        <position position="2"/>
    </location>
</feature>
<feature type="sequence conflict" description="In Ref. 5; BAA05918." evidence="12" ref="5">
    <original>M</original>
    <variation>I</variation>
    <location>
        <position position="163"/>
    </location>
</feature>
<feature type="sequence conflict" description="In Ref. 5; BAA05918." evidence="12" ref="5">
    <original>A</original>
    <variation>P</variation>
    <location>
        <position position="199"/>
    </location>
</feature>
<feature type="sequence conflict" description="In Ref. 5; BAA05918." evidence="12" ref="5">
    <original>D</original>
    <variation>A</variation>
    <location>
        <position position="351"/>
    </location>
</feature>
<feature type="sequence conflict" description="In Ref. 5; BAA05918." evidence="12" ref="5">
    <original>R</original>
    <variation>K</variation>
    <location>
        <position position="417"/>
    </location>
</feature>
<feature type="sequence conflict" description="In Ref. 5; BAA05918." evidence="12" ref="5">
    <original>KD</original>
    <variation>ES</variation>
    <location>
        <begin position="423"/>
        <end position="424"/>
    </location>
</feature>
<feature type="sequence conflict" description="In Ref. 5; BAA05918." evidence="12" ref="5">
    <original>R</original>
    <variation>H</variation>
    <location>
        <position position="428"/>
    </location>
</feature>
<feature type="sequence conflict" description="In Ref. 5; BAA05918." evidence="12" ref="5">
    <original>E</original>
    <variation>D</variation>
    <location>
        <position position="432"/>
    </location>
</feature>
<gene>
    <name type="primary">CPK6</name>
    <name type="synonym">CDPK3</name>
    <name type="ordered locus">At2g17290</name>
    <name type="ORF">F5J6.13</name>
</gene>
<evidence type="ECO:0000250" key="1"/>
<evidence type="ECO:0000250" key="2">
    <source>
        <dbReference type="UniProtKB" id="Q9FKW4"/>
    </source>
</evidence>
<evidence type="ECO:0000255" key="3"/>
<evidence type="ECO:0000255" key="4">
    <source>
        <dbReference type="PROSITE-ProRule" id="PRU00159"/>
    </source>
</evidence>
<evidence type="ECO:0000255" key="5">
    <source>
        <dbReference type="PROSITE-ProRule" id="PRU00448"/>
    </source>
</evidence>
<evidence type="ECO:0000255" key="6">
    <source>
        <dbReference type="PROSITE-ProRule" id="PRU10027"/>
    </source>
</evidence>
<evidence type="ECO:0000256" key="7">
    <source>
        <dbReference type="SAM" id="MobiDB-lite"/>
    </source>
</evidence>
<evidence type="ECO:0000269" key="8">
    <source>
    </source>
</evidence>
<evidence type="ECO:0000269" key="9">
    <source>
    </source>
</evidence>
<evidence type="ECO:0000269" key="10">
    <source>
    </source>
</evidence>
<evidence type="ECO:0000269" key="11">
    <source>
    </source>
</evidence>
<evidence type="ECO:0000305" key="12"/>
<organism>
    <name type="scientific">Arabidopsis thaliana</name>
    <name type="common">Mouse-ear cress</name>
    <dbReference type="NCBI Taxonomy" id="3702"/>
    <lineage>
        <taxon>Eukaryota</taxon>
        <taxon>Viridiplantae</taxon>
        <taxon>Streptophyta</taxon>
        <taxon>Embryophyta</taxon>
        <taxon>Tracheophyta</taxon>
        <taxon>Spermatophyta</taxon>
        <taxon>Magnoliopsida</taxon>
        <taxon>eudicotyledons</taxon>
        <taxon>Gunneridae</taxon>
        <taxon>Pentapetalae</taxon>
        <taxon>rosids</taxon>
        <taxon>malvids</taxon>
        <taxon>Brassicales</taxon>
        <taxon>Brassicaceae</taxon>
        <taxon>Camelineae</taxon>
        <taxon>Arabidopsis</taxon>
    </lineage>
</organism>
<name>CDPK6_ARATH</name>
<keyword id="KW-0067">ATP-binding</keyword>
<keyword id="KW-0106">Calcium</keyword>
<keyword id="KW-1003">Cell membrane</keyword>
<keyword id="KW-0418">Kinase</keyword>
<keyword id="KW-0449">Lipoprotein</keyword>
<keyword id="KW-0472">Membrane</keyword>
<keyword id="KW-0479">Metal-binding</keyword>
<keyword id="KW-0519">Myristate</keyword>
<keyword id="KW-0547">Nucleotide-binding</keyword>
<keyword id="KW-0539">Nucleus</keyword>
<keyword id="KW-0597">Phosphoprotein</keyword>
<keyword id="KW-1185">Reference proteome</keyword>
<keyword id="KW-0677">Repeat</keyword>
<keyword id="KW-0723">Serine/threonine-protein kinase</keyword>
<keyword id="KW-0808">Transferase</keyword>
<dbReference type="EC" id="2.7.11.1"/>
<dbReference type="EMBL" id="U31835">
    <property type="protein sequence ID" value="AAB03246.1"/>
    <property type="molecule type" value="mRNA"/>
</dbReference>
<dbReference type="EMBL" id="CP002685">
    <property type="protein sequence ID" value="AEC06609.1"/>
    <property type="molecule type" value="Genomic_DNA"/>
</dbReference>
<dbReference type="EMBL" id="CP002685">
    <property type="protein sequence ID" value="ANM61864.1"/>
    <property type="molecule type" value="Genomic_DNA"/>
</dbReference>
<dbReference type="EMBL" id="AY140007">
    <property type="protein sequence ID" value="AAM98149.1"/>
    <property type="molecule type" value="mRNA"/>
</dbReference>
<dbReference type="EMBL" id="BT002600">
    <property type="protein sequence ID" value="AAO00960.1"/>
    <property type="molecule type" value="mRNA"/>
</dbReference>
<dbReference type="EMBL" id="D28582">
    <property type="protein sequence ID" value="BAA05918.1"/>
    <property type="status" value="ALT_SEQ"/>
    <property type="molecule type" value="mRNA"/>
</dbReference>
<dbReference type="PIR" id="D84550">
    <property type="entry name" value="D84550"/>
</dbReference>
<dbReference type="RefSeq" id="NP_001324056.1">
    <property type="nucleotide sequence ID" value="NM_001335545.1"/>
</dbReference>
<dbReference type="RefSeq" id="NP_565411.2">
    <property type="nucleotide sequence ID" value="NM_127284.3"/>
</dbReference>
<dbReference type="SMR" id="Q38872"/>
<dbReference type="BioGRID" id="1592">
    <property type="interactions" value="8"/>
</dbReference>
<dbReference type="DIP" id="DIP-59319N"/>
<dbReference type="FunCoup" id="Q38872">
    <property type="interactions" value="1085"/>
</dbReference>
<dbReference type="IntAct" id="Q38872">
    <property type="interactions" value="3"/>
</dbReference>
<dbReference type="STRING" id="3702.Q38872"/>
<dbReference type="iPTMnet" id="Q38872"/>
<dbReference type="PaxDb" id="3702-AT2G17290.1"/>
<dbReference type="ProteomicsDB" id="220467"/>
<dbReference type="EnsemblPlants" id="AT2G17290.1">
    <property type="protein sequence ID" value="AT2G17290.1"/>
    <property type="gene ID" value="AT2G17290"/>
</dbReference>
<dbReference type="EnsemblPlants" id="AT2G17290.2">
    <property type="protein sequence ID" value="AT2G17290.2"/>
    <property type="gene ID" value="AT2G17290"/>
</dbReference>
<dbReference type="GeneID" id="816235"/>
<dbReference type="Gramene" id="AT2G17290.1">
    <property type="protein sequence ID" value="AT2G17290.1"/>
    <property type="gene ID" value="AT2G17290"/>
</dbReference>
<dbReference type="Gramene" id="AT2G17290.2">
    <property type="protein sequence ID" value="AT2G17290.2"/>
    <property type="gene ID" value="AT2G17290"/>
</dbReference>
<dbReference type="KEGG" id="ath:AT2G17290"/>
<dbReference type="Araport" id="AT2G17290"/>
<dbReference type="TAIR" id="AT2G17290">
    <property type="gene designation" value="CPK6"/>
</dbReference>
<dbReference type="eggNOG" id="KOG0032">
    <property type="taxonomic scope" value="Eukaryota"/>
</dbReference>
<dbReference type="HOGENOM" id="CLU_000288_37_4_1"/>
<dbReference type="InParanoid" id="Q38872"/>
<dbReference type="OMA" id="WIDKHNS"/>
<dbReference type="PhylomeDB" id="Q38872"/>
<dbReference type="PRO" id="PR:Q38872"/>
<dbReference type="Proteomes" id="UP000006548">
    <property type="component" value="Chromosome 2"/>
</dbReference>
<dbReference type="ExpressionAtlas" id="Q38872">
    <property type="expression patterns" value="baseline and differential"/>
</dbReference>
<dbReference type="GO" id="GO:0005829">
    <property type="term" value="C:cytosol"/>
    <property type="evidence" value="ECO:0007005"/>
    <property type="project" value="TAIR"/>
</dbReference>
<dbReference type="GO" id="GO:0016020">
    <property type="term" value="C:membrane"/>
    <property type="evidence" value="ECO:0000304"/>
    <property type="project" value="TAIR"/>
</dbReference>
<dbReference type="GO" id="GO:0005739">
    <property type="term" value="C:mitochondrion"/>
    <property type="evidence" value="ECO:0007005"/>
    <property type="project" value="TAIR"/>
</dbReference>
<dbReference type="GO" id="GO:0005634">
    <property type="term" value="C:nucleus"/>
    <property type="evidence" value="ECO:0007669"/>
    <property type="project" value="UniProtKB-SubCell"/>
</dbReference>
<dbReference type="GO" id="GO:0005886">
    <property type="term" value="C:plasma membrane"/>
    <property type="evidence" value="ECO:0007669"/>
    <property type="project" value="UniProtKB-SubCell"/>
</dbReference>
<dbReference type="GO" id="GO:0005524">
    <property type="term" value="F:ATP binding"/>
    <property type="evidence" value="ECO:0007669"/>
    <property type="project" value="UniProtKB-KW"/>
</dbReference>
<dbReference type="GO" id="GO:0005509">
    <property type="term" value="F:calcium ion binding"/>
    <property type="evidence" value="ECO:0007669"/>
    <property type="project" value="InterPro"/>
</dbReference>
<dbReference type="GO" id="GO:0009931">
    <property type="term" value="F:calcium-dependent protein serine/threonine kinase activity"/>
    <property type="evidence" value="ECO:0000314"/>
    <property type="project" value="TAIR"/>
</dbReference>
<dbReference type="GO" id="GO:0106310">
    <property type="term" value="F:protein serine kinase activity"/>
    <property type="evidence" value="ECO:0007669"/>
    <property type="project" value="RHEA"/>
</dbReference>
<dbReference type="GO" id="GO:0004674">
    <property type="term" value="F:protein serine/threonine kinase activity"/>
    <property type="evidence" value="ECO:0007005"/>
    <property type="project" value="TAIR"/>
</dbReference>
<dbReference type="GO" id="GO:0009738">
    <property type="term" value="P:abscisic acid-activated signaling pathway"/>
    <property type="evidence" value="ECO:0000315"/>
    <property type="project" value="TAIR"/>
</dbReference>
<dbReference type="GO" id="GO:0046777">
    <property type="term" value="P:protein autophosphorylation"/>
    <property type="evidence" value="ECO:0007005"/>
    <property type="project" value="TAIR"/>
</dbReference>
<dbReference type="GO" id="GO:0010359">
    <property type="term" value="P:regulation of anion channel activity"/>
    <property type="evidence" value="ECO:0000315"/>
    <property type="project" value="TAIR"/>
</dbReference>
<dbReference type="GO" id="GO:0010119">
    <property type="term" value="P:regulation of stomatal movement"/>
    <property type="evidence" value="ECO:0000315"/>
    <property type="project" value="TAIR"/>
</dbReference>
<dbReference type="GO" id="GO:1902456">
    <property type="term" value="P:regulation of stomatal opening"/>
    <property type="evidence" value="ECO:0000315"/>
    <property type="project" value="TAIR"/>
</dbReference>
<dbReference type="CDD" id="cd05117">
    <property type="entry name" value="STKc_CAMK"/>
    <property type="match status" value="1"/>
</dbReference>
<dbReference type="FunFam" id="1.10.238.10:FF:000015">
    <property type="entry name" value="Calcium-dependent protein kinase 1"/>
    <property type="match status" value="1"/>
</dbReference>
<dbReference type="FunFam" id="3.30.200.20:FF:000004">
    <property type="entry name" value="Calcium-dependent protein kinase 1"/>
    <property type="match status" value="1"/>
</dbReference>
<dbReference type="FunFam" id="1.10.510.10:FF:000178">
    <property type="entry name" value="Calcium-dependent protein kinase 5"/>
    <property type="match status" value="1"/>
</dbReference>
<dbReference type="Gene3D" id="1.10.238.10">
    <property type="entry name" value="EF-hand"/>
    <property type="match status" value="1"/>
</dbReference>
<dbReference type="Gene3D" id="3.30.200.20">
    <property type="entry name" value="Phosphorylase Kinase, domain 1"/>
    <property type="match status" value="1"/>
</dbReference>
<dbReference type="Gene3D" id="1.10.510.10">
    <property type="entry name" value="Transferase(Phosphotransferase) domain 1"/>
    <property type="match status" value="1"/>
</dbReference>
<dbReference type="InterPro" id="IPR050205">
    <property type="entry name" value="CDPK_Ser/Thr_kinases"/>
</dbReference>
<dbReference type="InterPro" id="IPR011992">
    <property type="entry name" value="EF-hand-dom_pair"/>
</dbReference>
<dbReference type="InterPro" id="IPR018247">
    <property type="entry name" value="EF_Hand_1_Ca_BS"/>
</dbReference>
<dbReference type="InterPro" id="IPR002048">
    <property type="entry name" value="EF_hand_dom"/>
</dbReference>
<dbReference type="InterPro" id="IPR011009">
    <property type="entry name" value="Kinase-like_dom_sf"/>
</dbReference>
<dbReference type="InterPro" id="IPR000719">
    <property type="entry name" value="Prot_kinase_dom"/>
</dbReference>
<dbReference type="InterPro" id="IPR017441">
    <property type="entry name" value="Protein_kinase_ATP_BS"/>
</dbReference>
<dbReference type="InterPro" id="IPR008271">
    <property type="entry name" value="Ser/Thr_kinase_AS"/>
</dbReference>
<dbReference type="PANTHER" id="PTHR24349">
    <property type="entry name" value="SERINE/THREONINE-PROTEIN KINASE"/>
    <property type="match status" value="1"/>
</dbReference>
<dbReference type="Pfam" id="PF13499">
    <property type="entry name" value="EF-hand_7"/>
    <property type="match status" value="2"/>
</dbReference>
<dbReference type="Pfam" id="PF00069">
    <property type="entry name" value="Pkinase"/>
    <property type="match status" value="1"/>
</dbReference>
<dbReference type="SMART" id="SM00054">
    <property type="entry name" value="EFh"/>
    <property type="match status" value="4"/>
</dbReference>
<dbReference type="SMART" id="SM00220">
    <property type="entry name" value="S_TKc"/>
    <property type="match status" value="1"/>
</dbReference>
<dbReference type="SUPFAM" id="SSF47473">
    <property type="entry name" value="EF-hand"/>
    <property type="match status" value="1"/>
</dbReference>
<dbReference type="SUPFAM" id="SSF56112">
    <property type="entry name" value="Protein kinase-like (PK-like)"/>
    <property type="match status" value="1"/>
</dbReference>
<dbReference type="PROSITE" id="PS00018">
    <property type="entry name" value="EF_HAND_1"/>
    <property type="match status" value="4"/>
</dbReference>
<dbReference type="PROSITE" id="PS50222">
    <property type="entry name" value="EF_HAND_2"/>
    <property type="match status" value="4"/>
</dbReference>
<dbReference type="PROSITE" id="PS00107">
    <property type="entry name" value="PROTEIN_KINASE_ATP"/>
    <property type="match status" value="1"/>
</dbReference>
<dbReference type="PROSITE" id="PS50011">
    <property type="entry name" value="PROTEIN_KINASE_DOM"/>
    <property type="match status" value="1"/>
</dbReference>
<dbReference type="PROSITE" id="PS00108">
    <property type="entry name" value="PROTEIN_KINASE_ST"/>
    <property type="match status" value="1"/>
</dbReference>